<feature type="chain" id="PRO_0000114798" description="Ubiquitin">
    <location>
        <begin position="1"/>
        <end position="76"/>
    </location>
</feature>
<feature type="chain" id="PRO_0000396170" description="Ubiquitin">
    <location>
        <begin position="77"/>
        <end position="152"/>
    </location>
</feature>
<feature type="chain" id="PRO_0000396171" description="Ubiquitin-related">
    <location>
        <begin position="153"/>
        <end position="228"/>
    </location>
</feature>
<feature type="chain" id="PRO_0000396172" description="Ubiquitin">
    <location>
        <begin position="229"/>
        <end position="304"/>
    </location>
</feature>
<feature type="propeptide" id="PRO_0000396173">
    <location>
        <position position="305"/>
    </location>
</feature>
<feature type="domain" description="Ubiquitin-like 1" evidence="3">
    <location>
        <begin position="1"/>
        <end position="76"/>
    </location>
</feature>
<feature type="domain" description="Ubiquitin-like 2" evidence="3">
    <location>
        <begin position="77"/>
        <end position="152"/>
    </location>
</feature>
<feature type="domain" description="Ubiquitin-like 3" evidence="3">
    <location>
        <begin position="153"/>
        <end position="228"/>
    </location>
</feature>
<feature type="domain" description="Ubiquitin-like 4" evidence="3">
    <location>
        <begin position="229"/>
        <end position="304"/>
    </location>
</feature>
<feature type="site" description="Interacts with activating enzyme">
    <location>
        <position position="54"/>
    </location>
</feature>
<feature type="site" description="Essential for function">
    <location>
        <position position="68"/>
    </location>
</feature>
<feature type="site" description="Interacts with activating enzyme">
    <location>
        <position position="72"/>
    </location>
</feature>
<feature type="modified residue" description="Phosphoserine; by PINK1" evidence="2">
    <location>
        <position position="65"/>
    </location>
</feature>
<feature type="modified residue" description="ADP-ribosylglycine" evidence="2">
    <location>
        <position position="76"/>
    </location>
</feature>
<feature type="modified residue" description="Phosphoserine" evidence="2">
    <location>
        <position position="141"/>
    </location>
</feature>
<feature type="cross-link" description="Glycyl lysine isopeptide (Lys-Gly) (interchain with G-Cter in ubiquitin)" evidence="2">
    <location>
        <position position="6"/>
    </location>
</feature>
<feature type="cross-link" description="Glycyl lysine isopeptide (Lys-Gly) (interchain with G-Cter in ubiquitin)" evidence="2">
    <location>
        <position position="11"/>
    </location>
</feature>
<feature type="cross-link" description="Glycyl lysine isopeptide (Lys-Gly) (interchain with G-Cter in ubiquitin)" evidence="2">
    <location>
        <position position="27"/>
    </location>
</feature>
<feature type="cross-link" description="Glycyl lysine isopeptide (Lys-Gly) (interchain with G-Cter in ubiquitin)" evidence="2">
    <location>
        <position position="29"/>
    </location>
</feature>
<feature type="cross-link" description="Glycyl lysine isopeptide (Lys-Gly) (interchain with G-Cter in ubiquitin)" evidence="2">
    <location>
        <position position="33"/>
    </location>
</feature>
<feature type="cross-link" description="Glycyl lysine isopeptide (Lys-Gly) (interchain with G-Cter in ubiquitin)" evidence="2">
    <location>
        <position position="48"/>
    </location>
</feature>
<feature type="cross-link" description="Glycyl lysine isopeptide (Lys-Gly) (interchain with G-Cter in ubiquitin)" evidence="2">
    <location>
        <position position="63"/>
    </location>
</feature>
<feature type="cross-link" description="Glycyl lysine isopeptide (Gly-Lys) (interchain with K-? in acceptor proteins)" evidence="3">
    <location>
        <position position="76"/>
    </location>
</feature>
<organism>
    <name type="scientific">Equus caballus</name>
    <name type="common">Horse</name>
    <dbReference type="NCBI Taxonomy" id="9796"/>
    <lineage>
        <taxon>Eukaryota</taxon>
        <taxon>Metazoa</taxon>
        <taxon>Chordata</taxon>
        <taxon>Craniata</taxon>
        <taxon>Vertebrata</taxon>
        <taxon>Euteleostomi</taxon>
        <taxon>Mammalia</taxon>
        <taxon>Eutheria</taxon>
        <taxon>Laurasiatheria</taxon>
        <taxon>Perissodactyla</taxon>
        <taxon>Equidae</taxon>
        <taxon>Equus</taxon>
    </lineage>
</organism>
<keyword id="KW-0013">ADP-ribosylation</keyword>
<keyword id="KW-0963">Cytoplasm</keyword>
<keyword id="KW-1017">Isopeptide bond</keyword>
<keyword id="KW-0472">Membrane</keyword>
<keyword id="KW-0496">Mitochondrion</keyword>
<keyword id="KW-1000">Mitochondrion outer membrane</keyword>
<keyword id="KW-0539">Nucleus</keyword>
<keyword id="KW-0597">Phosphoprotein</keyword>
<keyword id="KW-1185">Reference proteome</keyword>
<keyword id="KW-0677">Repeat</keyword>
<keyword id="KW-0832">Ubl conjugation</keyword>
<name>UBB_HORSE</name>
<dbReference type="EMBL" id="AF506969">
    <property type="protein sequence ID" value="AAM34211.1"/>
    <property type="molecule type" value="mRNA"/>
</dbReference>
<dbReference type="RefSeq" id="NP_001075331.1">
    <property type="nucleotide sequence ID" value="NM_001081862.1"/>
</dbReference>
<dbReference type="SMR" id="Q8MKD1"/>
<dbReference type="STRING" id="9796.ENSECAP00000035675"/>
<dbReference type="PaxDb" id="9796-ENSECAP00000035675"/>
<dbReference type="GeneID" id="100033924"/>
<dbReference type="KEGG" id="ecb:100033924"/>
<dbReference type="CTD" id="7314"/>
<dbReference type="InParanoid" id="Q8MKD1"/>
<dbReference type="OrthoDB" id="428577at2759"/>
<dbReference type="Proteomes" id="UP000002281">
    <property type="component" value="Unplaced"/>
</dbReference>
<dbReference type="GO" id="GO:0005737">
    <property type="term" value="C:cytoplasm"/>
    <property type="evidence" value="ECO:0000318"/>
    <property type="project" value="GO_Central"/>
</dbReference>
<dbReference type="GO" id="GO:0005741">
    <property type="term" value="C:mitochondrial outer membrane"/>
    <property type="evidence" value="ECO:0007669"/>
    <property type="project" value="UniProtKB-SubCell"/>
</dbReference>
<dbReference type="GO" id="GO:0005634">
    <property type="term" value="C:nucleus"/>
    <property type="evidence" value="ECO:0000318"/>
    <property type="project" value="GO_Central"/>
</dbReference>
<dbReference type="GO" id="GO:0031386">
    <property type="term" value="F:protein tag activity"/>
    <property type="evidence" value="ECO:0000318"/>
    <property type="project" value="GO_Central"/>
</dbReference>
<dbReference type="GO" id="GO:0031625">
    <property type="term" value="F:ubiquitin protein ligase binding"/>
    <property type="evidence" value="ECO:0000318"/>
    <property type="project" value="GO_Central"/>
</dbReference>
<dbReference type="GO" id="GO:0019941">
    <property type="term" value="P:modification-dependent protein catabolic process"/>
    <property type="evidence" value="ECO:0000318"/>
    <property type="project" value="GO_Central"/>
</dbReference>
<dbReference type="GO" id="GO:0016567">
    <property type="term" value="P:protein ubiquitination"/>
    <property type="evidence" value="ECO:0000318"/>
    <property type="project" value="GO_Central"/>
</dbReference>
<dbReference type="CDD" id="cd01803">
    <property type="entry name" value="Ubl_ubiquitin"/>
    <property type="match status" value="4"/>
</dbReference>
<dbReference type="FunFam" id="3.10.20.90:FF:000158">
    <property type="entry name" value="Polyubiquitin 5"/>
    <property type="match status" value="4"/>
</dbReference>
<dbReference type="Gene3D" id="3.10.20.90">
    <property type="entry name" value="Phosphatidylinositol 3-kinase Catalytic Subunit, Chain A, domain 1"/>
    <property type="match status" value="4"/>
</dbReference>
<dbReference type="InterPro" id="IPR000626">
    <property type="entry name" value="Ubiquitin-like_dom"/>
</dbReference>
<dbReference type="InterPro" id="IPR029071">
    <property type="entry name" value="Ubiquitin-like_domsf"/>
</dbReference>
<dbReference type="InterPro" id="IPR019954">
    <property type="entry name" value="Ubiquitin_CS"/>
</dbReference>
<dbReference type="InterPro" id="IPR019956">
    <property type="entry name" value="Ubiquitin_dom"/>
</dbReference>
<dbReference type="InterPro" id="IPR050158">
    <property type="entry name" value="Ubiquitin_ubiquitin-like"/>
</dbReference>
<dbReference type="PANTHER" id="PTHR10666">
    <property type="entry name" value="UBIQUITIN"/>
    <property type="match status" value="1"/>
</dbReference>
<dbReference type="Pfam" id="PF00240">
    <property type="entry name" value="ubiquitin"/>
    <property type="match status" value="4"/>
</dbReference>
<dbReference type="PRINTS" id="PR00348">
    <property type="entry name" value="UBIQUITIN"/>
</dbReference>
<dbReference type="SMART" id="SM00213">
    <property type="entry name" value="UBQ"/>
    <property type="match status" value="4"/>
</dbReference>
<dbReference type="SUPFAM" id="SSF54236">
    <property type="entry name" value="Ubiquitin-like"/>
    <property type="match status" value="4"/>
</dbReference>
<dbReference type="PROSITE" id="PS00299">
    <property type="entry name" value="UBIQUITIN_1"/>
    <property type="match status" value="3"/>
</dbReference>
<dbReference type="PROSITE" id="PS50053">
    <property type="entry name" value="UBIQUITIN_2"/>
    <property type="match status" value="4"/>
</dbReference>
<gene>
    <name type="primary">UBB</name>
</gene>
<evidence type="ECO:0000250" key="1"/>
<evidence type="ECO:0000250" key="2">
    <source>
        <dbReference type="UniProtKB" id="P0CG47"/>
    </source>
</evidence>
<evidence type="ECO:0000255" key="3">
    <source>
        <dbReference type="PROSITE-ProRule" id="PRU00214"/>
    </source>
</evidence>
<evidence type="ECO:0000305" key="4"/>
<protein>
    <recommendedName>
        <fullName>Polyubiquitin-B</fullName>
    </recommendedName>
    <component>
        <recommendedName>
            <fullName>Ubiquitin</fullName>
        </recommendedName>
    </component>
    <component>
        <recommendedName>
            <fullName>Ubiquitin-related</fullName>
        </recommendedName>
    </component>
</protein>
<reference key="1">
    <citation type="submission" date="2002-04" db="EMBL/GenBank/DDBJ databases">
        <title>Equus caballus ubiquitin mRNA.</title>
        <authorList>
            <person name="Takafuji V.A."/>
            <person name="Sharova L.V."/>
            <person name="Crisman M.V."/>
            <person name="Howard R.D."/>
        </authorList>
    </citation>
    <scope>NUCLEOTIDE SEQUENCE [MRNA]</scope>
</reference>
<proteinExistence type="evidence at transcript level"/>
<comment type="function">
    <molecule>Ubiquitin</molecule>
    <text evidence="2">Exists either covalently attached to another protein, or free (unanchored). When covalently bound, it is conjugated to target proteins via an isopeptide bond either as a monomer (monoubiquitin), a polymer linked via different Lys residues of the ubiquitin (polyubiquitin chains) or a linear polymer linked via the initiator Met of the ubiquitin (linear polyubiquitin chains). Polyubiquitin chains, when attached to a target protein, have different functions depending on the Lys residue of the ubiquitin that is linked: Lys-6-linked may be involved in DNA repair; Lys-11-linked is involved in ERAD (endoplasmic reticulum-associated degradation) and in cell-cycle regulation; Lys-29-linked is involved in proteotoxic stress response and cell cycle; Lys-33-linked is involved in kinase modification; Lys-48-linked is involved in protein degradation via the proteasome; Lys-63-linked is involved in endocytosis, DNA-damage responses as well as in signaling processes leading to activation of the transcription factor NF-kappa-B. Linear polymer chains formed via attachment by the initiator Met lead to cell signaling. Ubiquitin is usually conjugated to Lys residues of target proteins, however, in rare cases, conjugation to Cys or Ser residues has been observed. When polyubiquitin is free (unanchored-polyubiquitin), it also has distinct roles, such as in activation of protein kinases, and in signaling.</text>
</comment>
<comment type="subunit">
    <text evidence="2">Interacts with SKP1-KMD2A and SKP1-KMD2B complexes.</text>
</comment>
<comment type="subcellular location">
    <molecule>Ubiquitin</molecule>
    <subcellularLocation>
        <location evidence="1">Cytoplasm</location>
    </subcellularLocation>
    <subcellularLocation>
        <location evidence="1">Nucleus</location>
    </subcellularLocation>
    <subcellularLocation>
        <location evidence="2">Mitochondrion outer membrane</location>
        <topology evidence="2">Peripheral membrane protein</topology>
    </subcellularLocation>
</comment>
<comment type="PTM">
    <molecule>Ubiquitin</molecule>
    <text evidence="2">Phosphorylated at Ser-65 by PINK1 during mitophagy. Phosphorylated ubiquitin specifically binds and activates parkin (PRKN), triggering mitophagy. Phosphorylation does not affect E1-mediated E2 charging of ubiquitin but affects discharging of E2 enzymes to form polyubiquitin chains. It also affects deubiquitination by deubiquitinase enzymes such as USP30.</text>
</comment>
<comment type="PTM">
    <molecule>Ubiquitin</molecule>
    <text evidence="2">Mono-ADP-ribosylated at the C-terminus by PARP9, a component of the PPAR9-DTX3L complex. ADP-ribosylation requires processing by E1 and E2 enzymes and prevents ubiquitin conjugation to substrates such as histones.</text>
</comment>
<comment type="miscellaneous">
    <text>Ubiquitin is encoded by 4 different genes. Uba52 and Rps27a genes code for a single copy of ubiquitin fused to the ribosomal proteins eL40 and eS31, respectively. UBB and UBC genes code for a polyubiquitin precursor with exact head to tail repeats, the number of repeats differ between species and strains.</text>
</comment>
<comment type="miscellaneous">
    <text>For the sake of clarity sequence features are annotated only for the first chain, and are not repeated for each of the following chains.</text>
</comment>
<comment type="similarity">
    <text evidence="4">Belongs to the ubiquitin family.</text>
</comment>
<accession>Q8MKD1</accession>
<sequence length="305" mass="34342">MQIFVKTLTGKTITLEVEPSDTIENVKAKIQDKEGIPPDQQRLIFAGKQLEDGRTLSDYNIQKESTLHLVLRLRGGMQIFVKTLTGKTITLEVEPSDTIENVKAKIQDKEGIPPDQQRLIFAGKQLEDGRTLSDYNIQKESTLHLVLRLRGGMQIFVKTLTGKTITLEVEPSDTIENVKAKIQDKEGIPPDQQRFIFAGKQLEDGRTLSDYNIQKESTLHLVLRLRGGMQIFVKTLTGKTITLEVEPSDTIENVKAKIQDKEGIPPDQQRLIFAGKQLEDGRTLSDYNIQKESTLHLVLRLRGGC</sequence>